<feature type="chain" id="PRO_1000119127" description="UDP-N-acetylglucosamine 1-carboxyvinyltransferase">
    <location>
        <begin position="1"/>
        <end position="422"/>
    </location>
</feature>
<feature type="active site" description="Proton donor" evidence="1">
    <location>
        <position position="117"/>
    </location>
</feature>
<feature type="binding site" evidence="1">
    <location>
        <begin position="24"/>
        <end position="25"/>
    </location>
    <ligand>
        <name>phosphoenolpyruvate</name>
        <dbReference type="ChEBI" id="CHEBI:58702"/>
    </ligand>
</feature>
<feature type="binding site" evidence="1">
    <location>
        <position position="93"/>
    </location>
    <ligand>
        <name>UDP-N-acetyl-alpha-D-glucosamine</name>
        <dbReference type="ChEBI" id="CHEBI:57705"/>
    </ligand>
</feature>
<feature type="binding site" evidence="1">
    <location>
        <begin position="122"/>
        <end position="126"/>
    </location>
    <ligand>
        <name>UDP-N-acetyl-alpha-D-glucosamine</name>
        <dbReference type="ChEBI" id="CHEBI:57705"/>
    </ligand>
</feature>
<feature type="binding site" evidence="1">
    <location>
        <begin position="162"/>
        <end position="165"/>
    </location>
    <ligand>
        <name>UDP-N-acetyl-alpha-D-glucosamine</name>
        <dbReference type="ChEBI" id="CHEBI:57705"/>
    </ligand>
</feature>
<feature type="binding site" evidence="1">
    <location>
        <position position="307"/>
    </location>
    <ligand>
        <name>UDP-N-acetyl-alpha-D-glucosamine</name>
        <dbReference type="ChEBI" id="CHEBI:57705"/>
    </ligand>
</feature>
<feature type="binding site" evidence="1">
    <location>
        <position position="329"/>
    </location>
    <ligand>
        <name>UDP-N-acetyl-alpha-D-glucosamine</name>
        <dbReference type="ChEBI" id="CHEBI:57705"/>
    </ligand>
</feature>
<feature type="modified residue" description="2-(S-cysteinyl)pyruvic acid O-phosphothioketal" evidence="1">
    <location>
        <position position="117"/>
    </location>
</feature>
<comment type="function">
    <text evidence="1">Cell wall formation. Adds enolpyruvyl to UDP-N-acetylglucosamine.</text>
</comment>
<comment type="catalytic activity">
    <reaction evidence="1">
        <text>phosphoenolpyruvate + UDP-N-acetyl-alpha-D-glucosamine = UDP-N-acetyl-3-O-(1-carboxyvinyl)-alpha-D-glucosamine + phosphate</text>
        <dbReference type="Rhea" id="RHEA:18681"/>
        <dbReference type="ChEBI" id="CHEBI:43474"/>
        <dbReference type="ChEBI" id="CHEBI:57705"/>
        <dbReference type="ChEBI" id="CHEBI:58702"/>
        <dbReference type="ChEBI" id="CHEBI:68483"/>
        <dbReference type="EC" id="2.5.1.7"/>
    </reaction>
</comment>
<comment type="pathway">
    <text evidence="1">Cell wall biogenesis; peptidoglycan biosynthesis.</text>
</comment>
<comment type="subcellular location">
    <subcellularLocation>
        <location evidence="1">Cytoplasm</location>
    </subcellularLocation>
</comment>
<comment type="similarity">
    <text evidence="1">Belongs to the EPSP synthase family. MurA subfamily.</text>
</comment>
<sequence length="422" mass="44715">MMEKFRVIGSDKPLSGEVTISGAKNAALPILFASILAEEPVEVSNVPHLRDIDTTMELLKRLGAKVSRNGSVHVDGREINEFCAPYDLVKTMRASIWALGPLVARFGEGQVSLPGGCAIGARPVDLHIHGLEQLGATIVLEDGYVKASVDGRLKGAHIVMDKVSVGATITIMCAATLAEGTTVLDNSAREPEIVDTADFLNKLGAKISGAGTDTITIEGVERLGGGQHSVVADRIETGTFLVAAAVSGGKVVCRNTNAHLLEAALAKLEEAGAKVETGEGWISLDMTDRELKAVKIVTAPHPGFPTDMQAQFTLLNMMAKGSGVITETIFENRFMHIPELQRMGAKAEIEGNTAICGETEKLSGAQVMATDLRASASLVIAGCIAQGETIVDRIYHIDRGYDKIEDKLSALGANITRFSESN</sequence>
<keyword id="KW-0131">Cell cycle</keyword>
<keyword id="KW-0132">Cell division</keyword>
<keyword id="KW-0133">Cell shape</keyword>
<keyword id="KW-0961">Cell wall biogenesis/degradation</keyword>
<keyword id="KW-0963">Cytoplasm</keyword>
<keyword id="KW-0573">Peptidoglycan synthesis</keyword>
<keyword id="KW-0670">Pyruvate</keyword>
<keyword id="KW-0808">Transferase</keyword>
<organism>
    <name type="scientific">Vibrio atlanticus (strain LGP32)</name>
    <name type="common">Vibrio splendidus (strain Mel32)</name>
    <dbReference type="NCBI Taxonomy" id="575788"/>
    <lineage>
        <taxon>Bacteria</taxon>
        <taxon>Pseudomonadati</taxon>
        <taxon>Pseudomonadota</taxon>
        <taxon>Gammaproteobacteria</taxon>
        <taxon>Vibrionales</taxon>
        <taxon>Vibrionaceae</taxon>
        <taxon>Vibrio</taxon>
    </lineage>
</organism>
<accession>B7VKU1</accession>
<reference key="1">
    <citation type="submission" date="2009-02" db="EMBL/GenBank/DDBJ databases">
        <title>Vibrio splendidus str. LGP32 complete genome.</title>
        <authorList>
            <person name="Mazel D."/>
            <person name="Le Roux F."/>
        </authorList>
    </citation>
    <scope>NUCLEOTIDE SEQUENCE [LARGE SCALE GENOMIC DNA]</scope>
    <source>
        <strain>LGP32</strain>
    </source>
</reference>
<gene>
    <name evidence="1" type="primary">murA</name>
    <name type="ordered locus">VS_2744</name>
</gene>
<name>MURA_VIBA3</name>
<dbReference type="EC" id="2.5.1.7" evidence="1"/>
<dbReference type="EMBL" id="FM954972">
    <property type="protein sequence ID" value="CAV20010.1"/>
    <property type="molecule type" value="Genomic_DNA"/>
</dbReference>
<dbReference type="SMR" id="B7VKU1"/>
<dbReference type="STRING" id="575788.VS_2744"/>
<dbReference type="KEGG" id="vsp:VS_2744"/>
<dbReference type="eggNOG" id="COG0766">
    <property type="taxonomic scope" value="Bacteria"/>
</dbReference>
<dbReference type="HOGENOM" id="CLU_027387_0_0_6"/>
<dbReference type="UniPathway" id="UPA00219"/>
<dbReference type="Proteomes" id="UP000009100">
    <property type="component" value="Chromosome 1"/>
</dbReference>
<dbReference type="GO" id="GO:0005737">
    <property type="term" value="C:cytoplasm"/>
    <property type="evidence" value="ECO:0007669"/>
    <property type="project" value="UniProtKB-SubCell"/>
</dbReference>
<dbReference type="GO" id="GO:0008760">
    <property type="term" value="F:UDP-N-acetylglucosamine 1-carboxyvinyltransferase activity"/>
    <property type="evidence" value="ECO:0007669"/>
    <property type="project" value="UniProtKB-UniRule"/>
</dbReference>
<dbReference type="GO" id="GO:0051301">
    <property type="term" value="P:cell division"/>
    <property type="evidence" value="ECO:0007669"/>
    <property type="project" value="UniProtKB-KW"/>
</dbReference>
<dbReference type="GO" id="GO:0071555">
    <property type="term" value="P:cell wall organization"/>
    <property type="evidence" value="ECO:0007669"/>
    <property type="project" value="UniProtKB-KW"/>
</dbReference>
<dbReference type="GO" id="GO:0009252">
    <property type="term" value="P:peptidoglycan biosynthetic process"/>
    <property type="evidence" value="ECO:0007669"/>
    <property type="project" value="UniProtKB-UniRule"/>
</dbReference>
<dbReference type="GO" id="GO:0008360">
    <property type="term" value="P:regulation of cell shape"/>
    <property type="evidence" value="ECO:0007669"/>
    <property type="project" value="UniProtKB-KW"/>
</dbReference>
<dbReference type="GO" id="GO:0019277">
    <property type="term" value="P:UDP-N-acetylgalactosamine biosynthetic process"/>
    <property type="evidence" value="ECO:0007669"/>
    <property type="project" value="InterPro"/>
</dbReference>
<dbReference type="CDD" id="cd01555">
    <property type="entry name" value="UdpNAET"/>
    <property type="match status" value="1"/>
</dbReference>
<dbReference type="FunFam" id="3.65.10.10:FF:000001">
    <property type="entry name" value="UDP-N-acetylglucosamine 1-carboxyvinyltransferase"/>
    <property type="match status" value="1"/>
</dbReference>
<dbReference type="Gene3D" id="3.65.10.10">
    <property type="entry name" value="Enolpyruvate transferase domain"/>
    <property type="match status" value="2"/>
</dbReference>
<dbReference type="HAMAP" id="MF_00111">
    <property type="entry name" value="MurA"/>
    <property type="match status" value="1"/>
</dbReference>
<dbReference type="InterPro" id="IPR001986">
    <property type="entry name" value="Enolpyruvate_Tfrase_dom"/>
</dbReference>
<dbReference type="InterPro" id="IPR036968">
    <property type="entry name" value="Enolpyruvate_Tfrase_sf"/>
</dbReference>
<dbReference type="InterPro" id="IPR050068">
    <property type="entry name" value="MurA_subfamily"/>
</dbReference>
<dbReference type="InterPro" id="IPR013792">
    <property type="entry name" value="RNA3'P_cycl/enolpyr_Trfase_a/b"/>
</dbReference>
<dbReference type="InterPro" id="IPR005750">
    <property type="entry name" value="UDP_GlcNAc_COvinyl_MurA"/>
</dbReference>
<dbReference type="NCBIfam" id="TIGR01072">
    <property type="entry name" value="murA"/>
    <property type="match status" value="1"/>
</dbReference>
<dbReference type="NCBIfam" id="NF006873">
    <property type="entry name" value="PRK09369.1"/>
    <property type="match status" value="1"/>
</dbReference>
<dbReference type="PANTHER" id="PTHR43783">
    <property type="entry name" value="UDP-N-ACETYLGLUCOSAMINE 1-CARBOXYVINYLTRANSFERASE"/>
    <property type="match status" value="1"/>
</dbReference>
<dbReference type="PANTHER" id="PTHR43783:SF1">
    <property type="entry name" value="UDP-N-ACETYLGLUCOSAMINE 1-CARBOXYVINYLTRANSFERASE"/>
    <property type="match status" value="1"/>
</dbReference>
<dbReference type="Pfam" id="PF00275">
    <property type="entry name" value="EPSP_synthase"/>
    <property type="match status" value="1"/>
</dbReference>
<dbReference type="SUPFAM" id="SSF55205">
    <property type="entry name" value="EPT/RTPC-like"/>
    <property type="match status" value="1"/>
</dbReference>
<evidence type="ECO:0000255" key="1">
    <source>
        <dbReference type="HAMAP-Rule" id="MF_00111"/>
    </source>
</evidence>
<protein>
    <recommendedName>
        <fullName evidence="1">UDP-N-acetylglucosamine 1-carboxyvinyltransferase</fullName>
        <ecNumber evidence="1">2.5.1.7</ecNumber>
    </recommendedName>
    <alternativeName>
        <fullName evidence="1">Enoylpyruvate transferase</fullName>
    </alternativeName>
    <alternativeName>
        <fullName evidence="1">UDP-N-acetylglucosamine enolpyruvyl transferase</fullName>
        <shortName evidence="1">EPT</shortName>
    </alternativeName>
</protein>
<proteinExistence type="inferred from homology"/>